<keyword id="KW-0028">Amino-acid biosynthesis</keyword>
<keyword id="KW-0963">Cytoplasm</keyword>
<keyword id="KW-0521">NADP</keyword>
<keyword id="KW-0560">Oxidoreductase</keyword>
<keyword id="KW-0641">Proline biosynthesis</keyword>
<keyword id="KW-1185">Reference proteome</keyword>
<feature type="chain" id="PRO_0000189760" description="Gamma-glutamyl phosphate reductase">
    <location>
        <begin position="1"/>
        <end position="420"/>
    </location>
</feature>
<gene>
    <name evidence="1" type="primary">proA</name>
    <name type="ordered locus">PM0936</name>
</gene>
<accession>Q9CM98</accession>
<name>PROA_PASMU</name>
<comment type="function">
    <text evidence="1">Catalyzes the NADPH-dependent reduction of L-glutamate 5-phosphate into L-glutamate 5-semialdehyde and phosphate. The product spontaneously undergoes cyclization to form 1-pyrroline-5-carboxylate.</text>
</comment>
<comment type="catalytic activity">
    <reaction evidence="1">
        <text>L-glutamate 5-semialdehyde + phosphate + NADP(+) = L-glutamyl 5-phosphate + NADPH + H(+)</text>
        <dbReference type="Rhea" id="RHEA:19541"/>
        <dbReference type="ChEBI" id="CHEBI:15378"/>
        <dbReference type="ChEBI" id="CHEBI:43474"/>
        <dbReference type="ChEBI" id="CHEBI:57783"/>
        <dbReference type="ChEBI" id="CHEBI:58066"/>
        <dbReference type="ChEBI" id="CHEBI:58274"/>
        <dbReference type="ChEBI" id="CHEBI:58349"/>
        <dbReference type="EC" id="1.2.1.41"/>
    </reaction>
</comment>
<comment type="pathway">
    <text evidence="1">Amino-acid biosynthesis; L-proline biosynthesis; L-glutamate 5-semialdehyde from L-glutamate: step 2/2.</text>
</comment>
<comment type="subcellular location">
    <subcellularLocation>
        <location evidence="1">Cytoplasm</location>
    </subcellularLocation>
</comment>
<comment type="similarity">
    <text evidence="1">Belongs to the gamma-glutamyl phosphate reductase family.</text>
</comment>
<dbReference type="EC" id="1.2.1.41" evidence="1"/>
<dbReference type="EMBL" id="AE004439">
    <property type="protein sequence ID" value="AAK03020.1"/>
    <property type="molecule type" value="Genomic_DNA"/>
</dbReference>
<dbReference type="RefSeq" id="WP_010906929.1">
    <property type="nucleotide sequence ID" value="NC_002663.1"/>
</dbReference>
<dbReference type="SMR" id="Q9CM98"/>
<dbReference type="STRING" id="272843.PM0936"/>
<dbReference type="EnsemblBacteria" id="AAK03020">
    <property type="protein sequence ID" value="AAK03020"/>
    <property type="gene ID" value="PM0936"/>
</dbReference>
<dbReference type="KEGG" id="pmu:PM0936"/>
<dbReference type="PATRIC" id="fig|272843.6.peg.947"/>
<dbReference type="HOGENOM" id="CLU_030231_0_0_6"/>
<dbReference type="OrthoDB" id="9809970at2"/>
<dbReference type="UniPathway" id="UPA00098">
    <property type="reaction ID" value="UER00360"/>
</dbReference>
<dbReference type="Proteomes" id="UP000000809">
    <property type="component" value="Chromosome"/>
</dbReference>
<dbReference type="GO" id="GO:0005737">
    <property type="term" value="C:cytoplasm"/>
    <property type="evidence" value="ECO:0007669"/>
    <property type="project" value="UniProtKB-SubCell"/>
</dbReference>
<dbReference type="GO" id="GO:0004350">
    <property type="term" value="F:glutamate-5-semialdehyde dehydrogenase activity"/>
    <property type="evidence" value="ECO:0007669"/>
    <property type="project" value="UniProtKB-UniRule"/>
</dbReference>
<dbReference type="GO" id="GO:0050661">
    <property type="term" value="F:NADP binding"/>
    <property type="evidence" value="ECO:0007669"/>
    <property type="project" value="InterPro"/>
</dbReference>
<dbReference type="GO" id="GO:0055129">
    <property type="term" value="P:L-proline biosynthetic process"/>
    <property type="evidence" value="ECO:0007669"/>
    <property type="project" value="UniProtKB-UniRule"/>
</dbReference>
<dbReference type="CDD" id="cd07079">
    <property type="entry name" value="ALDH_F18-19_ProA-GPR"/>
    <property type="match status" value="1"/>
</dbReference>
<dbReference type="FunFam" id="3.40.309.10:FF:000028">
    <property type="entry name" value="Gamma-glutamyl phosphate reductase"/>
    <property type="match status" value="1"/>
</dbReference>
<dbReference type="Gene3D" id="3.40.605.10">
    <property type="entry name" value="Aldehyde Dehydrogenase, Chain A, domain 1"/>
    <property type="match status" value="1"/>
</dbReference>
<dbReference type="Gene3D" id="3.40.309.10">
    <property type="entry name" value="Aldehyde Dehydrogenase, Chain A, domain 2"/>
    <property type="match status" value="1"/>
</dbReference>
<dbReference type="HAMAP" id="MF_00412">
    <property type="entry name" value="ProA"/>
    <property type="match status" value="1"/>
</dbReference>
<dbReference type="InterPro" id="IPR016161">
    <property type="entry name" value="Ald_DH/histidinol_DH"/>
</dbReference>
<dbReference type="InterPro" id="IPR016163">
    <property type="entry name" value="Ald_DH_C"/>
</dbReference>
<dbReference type="InterPro" id="IPR016162">
    <property type="entry name" value="Ald_DH_N"/>
</dbReference>
<dbReference type="InterPro" id="IPR015590">
    <property type="entry name" value="Aldehyde_DH_dom"/>
</dbReference>
<dbReference type="InterPro" id="IPR020593">
    <property type="entry name" value="G-glutamylP_reductase_CS"/>
</dbReference>
<dbReference type="InterPro" id="IPR012134">
    <property type="entry name" value="Glu-5-SA_DH"/>
</dbReference>
<dbReference type="InterPro" id="IPR000965">
    <property type="entry name" value="GPR_dom"/>
</dbReference>
<dbReference type="NCBIfam" id="NF001221">
    <property type="entry name" value="PRK00197.1"/>
    <property type="match status" value="1"/>
</dbReference>
<dbReference type="NCBIfam" id="TIGR00407">
    <property type="entry name" value="proA"/>
    <property type="match status" value="1"/>
</dbReference>
<dbReference type="PANTHER" id="PTHR11063:SF8">
    <property type="entry name" value="DELTA-1-PYRROLINE-5-CARBOXYLATE SYNTHASE"/>
    <property type="match status" value="1"/>
</dbReference>
<dbReference type="PANTHER" id="PTHR11063">
    <property type="entry name" value="GLUTAMATE SEMIALDEHYDE DEHYDROGENASE"/>
    <property type="match status" value="1"/>
</dbReference>
<dbReference type="Pfam" id="PF00171">
    <property type="entry name" value="Aldedh"/>
    <property type="match status" value="1"/>
</dbReference>
<dbReference type="PIRSF" id="PIRSF000151">
    <property type="entry name" value="GPR"/>
    <property type="match status" value="1"/>
</dbReference>
<dbReference type="SUPFAM" id="SSF53720">
    <property type="entry name" value="ALDH-like"/>
    <property type="match status" value="1"/>
</dbReference>
<dbReference type="PROSITE" id="PS01223">
    <property type="entry name" value="PROA"/>
    <property type="match status" value="1"/>
</dbReference>
<evidence type="ECO:0000255" key="1">
    <source>
        <dbReference type="HAMAP-Rule" id="MF_00412"/>
    </source>
</evidence>
<sequence length="420" mass="45758">MTTNLQEMGKQAKQAAFVLAQLSQQQKNQALEIIAQQLEAQSDKILAENQKDIALAKQNGLSDAIIDRLLLTPSRLNDIANDVHHVISLADPVGQLIDGGILDSGLKIERVRVPLGVIGTIYEARPNVTIDVASLCLKTGNAVILRGGKETQYSNKILVDVVQHALVQAGLPKYAIQAITDPDRHLVMELLKLDRYVDMIIPRGGASLHELCKQHSTIPVIVGGIGVCHLFIEQSADLDKALPLIENAKTQRPSTCNTLETLLVQRAIATQFLPKLAQHLSAKHVKFHADPTALAILQSVQADVEPVQAHQLRQEWLSYDLNVVIVDDIEQAIAHIREYGSQHSDGILTGSQRLAQQFVAQVDSAAVYVNASTRFTDGGQFGLGAEVAVSTQKLHARGPMGLEALTTYKWVCVGDYCVRS</sequence>
<organism>
    <name type="scientific">Pasteurella multocida (strain Pm70)</name>
    <dbReference type="NCBI Taxonomy" id="272843"/>
    <lineage>
        <taxon>Bacteria</taxon>
        <taxon>Pseudomonadati</taxon>
        <taxon>Pseudomonadota</taxon>
        <taxon>Gammaproteobacteria</taxon>
        <taxon>Pasteurellales</taxon>
        <taxon>Pasteurellaceae</taxon>
        <taxon>Pasteurella</taxon>
    </lineage>
</organism>
<reference key="1">
    <citation type="journal article" date="2001" name="Proc. Natl. Acad. Sci. U.S.A.">
        <title>Complete genomic sequence of Pasteurella multocida Pm70.</title>
        <authorList>
            <person name="May B.J."/>
            <person name="Zhang Q."/>
            <person name="Li L.L."/>
            <person name="Paustian M.L."/>
            <person name="Whittam T.S."/>
            <person name="Kapur V."/>
        </authorList>
    </citation>
    <scope>NUCLEOTIDE SEQUENCE [LARGE SCALE GENOMIC DNA]</scope>
    <source>
        <strain>Pm70</strain>
    </source>
</reference>
<protein>
    <recommendedName>
        <fullName evidence="1">Gamma-glutamyl phosphate reductase</fullName>
        <shortName evidence="1">GPR</shortName>
        <ecNumber evidence="1">1.2.1.41</ecNumber>
    </recommendedName>
    <alternativeName>
        <fullName evidence="1">Glutamate-5-semialdehyde dehydrogenase</fullName>
    </alternativeName>
    <alternativeName>
        <fullName evidence="1">Glutamyl-gamma-semialdehyde dehydrogenase</fullName>
        <shortName evidence="1">GSA dehydrogenase</shortName>
    </alternativeName>
</protein>
<proteinExistence type="inferred from homology"/>